<feature type="chain" id="PRO_0000123926" description="Glutamate-pyruvate aminotransferase AlaC">
    <location>
        <begin position="1"/>
        <end position="412"/>
    </location>
</feature>
<feature type="modified residue" description="N6-(pyridoxal phosphate)lysine" evidence="1">
    <location>
        <position position="244"/>
    </location>
</feature>
<gene>
    <name evidence="5" type="primary">alaC</name>
    <name evidence="5" type="synonym">yfdZ</name>
    <name type="ordered locus">b2379</name>
    <name type="ordered locus">JW2376</name>
</gene>
<evidence type="ECO:0000250" key="1"/>
<evidence type="ECO:0000269" key="2">
    <source>
    </source>
</evidence>
<evidence type="ECO:0000269" key="3">
    <source>
    </source>
</evidence>
<evidence type="ECO:0000269" key="4">
    <source>
    </source>
</evidence>
<evidence type="ECO:0000303" key="5">
    <source>
    </source>
</evidence>
<evidence type="ECO:0000305" key="6"/>
<evidence type="ECO:0000305" key="7">
    <source>
    </source>
</evidence>
<name>ALAC_ECOLI</name>
<reference key="1">
    <citation type="journal article" date="1997" name="DNA Res.">
        <title>Construction of a contiguous 874-kb sequence of the Escherichia coli-K12 genome corresponding to 50.0-68.8 min on the linkage map and analysis of its sequence features.</title>
        <authorList>
            <person name="Yamamoto Y."/>
            <person name="Aiba H."/>
            <person name="Baba T."/>
            <person name="Hayashi K."/>
            <person name="Inada T."/>
            <person name="Isono K."/>
            <person name="Itoh T."/>
            <person name="Kimura S."/>
            <person name="Kitagawa M."/>
            <person name="Makino K."/>
            <person name="Miki T."/>
            <person name="Mitsuhashi N."/>
            <person name="Mizobuchi K."/>
            <person name="Mori H."/>
            <person name="Nakade S."/>
            <person name="Nakamura Y."/>
            <person name="Nashimoto H."/>
            <person name="Oshima T."/>
            <person name="Oyama S."/>
            <person name="Saito N."/>
            <person name="Sampei G."/>
            <person name="Satoh Y."/>
            <person name="Sivasundaram S."/>
            <person name="Tagami H."/>
            <person name="Takahashi H."/>
            <person name="Takeda J."/>
            <person name="Takemoto K."/>
            <person name="Uehara K."/>
            <person name="Wada C."/>
            <person name="Yamagata S."/>
            <person name="Horiuchi T."/>
        </authorList>
    </citation>
    <scope>NUCLEOTIDE SEQUENCE [LARGE SCALE GENOMIC DNA]</scope>
    <source>
        <strain>K12 / W3110 / ATCC 27325 / DSM 5911</strain>
    </source>
</reference>
<reference key="2">
    <citation type="journal article" date="1997" name="Science">
        <title>The complete genome sequence of Escherichia coli K-12.</title>
        <authorList>
            <person name="Blattner F.R."/>
            <person name="Plunkett G. III"/>
            <person name="Bloch C.A."/>
            <person name="Perna N.T."/>
            <person name="Burland V."/>
            <person name="Riley M."/>
            <person name="Collado-Vides J."/>
            <person name="Glasner J.D."/>
            <person name="Rode C.K."/>
            <person name="Mayhew G.F."/>
            <person name="Gregor J."/>
            <person name="Davis N.W."/>
            <person name="Kirkpatrick H.A."/>
            <person name="Goeden M.A."/>
            <person name="Rose D.J."/>
            <person name="Mau B."/>
            <person name="Shao Y."/>
        </authorList>
    </citation>
    <scope>NUCLEOTIDE SEQUENCE [LARGE SCALE GENOMIC DNA]</scope>
    <source>
        <strain>K12 / MG1655 / ATCC 47076</strain>
    </source>
</reference>
<reference key="3">
    <citation type="journal article" date="2006" name="Mol. Syst. Biol.">
        <title>Highly accurate genome sequences of Escherichia coli K-12 strains MG1655 and W3110.</title>
        <authorList>
            <person name="Hayashi K."/>
            <person name="Morooka N."/>
            <person name="Yamamoto Y."/>
            <person name="Fujita K."/>
            <person name="Isono K."/>
            <person name="Choi S."/>
            <person name="Ohtsubo E."/>
            <person name="Baba T."/>
            <person name="Wanner B.L."/>
            <person name="Mori H."/>
            <person name="Horiuchi T."/>
        </authorList>
    </citation>
    <scope>NUCLEOTIDE SEQUENCE [LARGE SCALE GENOMIC DNA]</scope>
    <source>
        <strain>K12 / W3110 / ATCC 27325 / DSM 5911</strain>
    </source>
</reference>
<reference key="4">
    <citation type="journal article" date="2007" name="J. Bacteriol.">
        <title>The novel transcription factor SgrR coordinates the response to glucose-phosphate stress.</title>
        <authorList>
            <person name="Vanderpool C.K."/>
            <person name="Gottesman S."/>
        </authorList>
    </citation>
    <scope>INDUCTION BY SGRR</scope>
</reference>
<reference key="5">
    <citation type="journal article" date="2010" name="J. Bacteriol.">
        <title>Genetics and regulation of the major enzymes of alanine synthesis in Escherichia coli.</title>
        <authorList>
            <person name="Kim S.H."/>
            <person name="Schneider B.L."/>
            <person name="Reitzer L."/>
        </authorList>
    </citation>
    <scope>FUNCTION IN ALANINE BIOSYNTHESIS</scope>
    <scope>CATALYTIC ACTIVITY</scope>
    <scope>BIOPHYSICOCHEMICAL PROPERTIES</scope>
    <scope>COFACTOR</scope>
    <scope>SUBUNIT</scope>
    <scope>INDUCTION</scope>
    <scope>NOMENCLATURE</scope>
    <scope>PATHWAY</scope>
</reference>
<reference key="6">
    <citation type="journal article" date="2011" name="Biosci. Biotechnol. Biochem.">
        <title>Isolation of a mutant auxotrophic for L-alanine and identification of three major aminotransferases that synthesize L-alanine in Escherichia coli.</title>
        <authorList>
            <person name="Yoneyama H."/>
            <person name="Hori H."/>
            <person name="Lim S.J."/>
            <person name="Murata T."/>
            <person name="Ando T."/>
            <person name="Isogai E."/>
            <person name="Katsumata R."/>
        </authorList>
    </citation>
    <scope>FUNCTION IN ALANINE BIOSYNTHESIS</scope>
</reference>
<organism>
    <name type="scientific">Escherichia coli (strain K12)</name>
    <dbReference type="NCBI Taxonomy" id="83333"/>
    <lineage>
        <taxon>Bacteria</taxon>
        <taxon>Pseudomonadati</taxon>
        <taxon>Pseudomonadota</taxon>
        <taxon>Gammaproteobacteria</taxon>
        <taxon>Enterobacterales</taxon>
        <taxon>Enterobacteriaceae</taxon>
        <taxon>Escherichia</taxon>
    </lineage>
</organism>
<dbReference type="EC" id="2.6.1.2" evidence="3"/>
<dbReference type="EMBL" id="U00096">
    <property type="protein sequence ID" value="AAC75438.1"/>
    <property type="molecule type" value="Genomic_DNA"/>
</dbReference>
<dbReference type="EMBL" id="AP009048">
    <property type="protein sequence ID" value="BAA16249.1"/>
    <property type="molecule type" value="Genomic_DNA"/>
</dbReference>
<dbReference type="PIR" id="H65011">
    <property type="entry name" value="H65011"/>
</dbReference>
<dbReference type="RefSeq" id="NP_416880.1">
    <property type="nucleotide sequence ID" value="NC_000913.3"/>
</dbReference>
<dbReference type="RefSeq" id="WP_000785931.1">
    <property type="nucleotide sequence ID" value="NZ_STEB01000008.1"/>
</dbReference>
<dbReference type="SMR" id="P77434"/>
<dbReference type="BioGRID" id="4260931">
    <property type="interactions" value="55"/>
</dbReference>
<dbReference type="BioGRID" id="851191">
    <property type="interactions" value="3"/>
</dbReference>
<dbReference type="DIP" id="DIP-12010N"/>
<dbReference type="FunCoup" id="P77434">
    <property type="interactions" value="151"/>
</dbReference>
<dbReference type="IntAct" id="P77434">
    <property type="interactions" value="8"/>
</dbReference>
<dbReference type="STRING" id="511145.b2379"/>
<dbReference type="jPOST" id="P77434"/>
<dbReference type="PaxDb" id="511145-b2379"/>
<dbReference type="EnsemblBacteria" id="AAC75438">
    <property type="protein sequence ID" value="AAC75438"/>
    <property type="gene ID" value="b2379"/>
</dbReference>
<dbReference type="GeneID" id="75202552"/>
<dbReference type="GeneID" id="946850"/>
<dbReference type="KEGG" id="ecj:JW2376"/>
<dbReference type="KEGG" id="eco:b2379"/>
<dbReference type="KEGG" id="ecoc:C3026_13230"/>
<dbReference type="PATRIC" id="fig|1411691.4.peg.4349"/>
<dbReference type="EchoBASE" id="EB3950"/>
<dbReference type="eggNOG" id="COG0436">
    <property type="taxonomic scope" value="Bacteria"/>
</dbReference>
<dbReference type="HOGENOM" id="CLU_017584_4_5_6"/>
<dbReference type="InParanoid" id="P77434"/>
<dbReference type="OMA" id="SKTFNMT"/>
<dbReference type="OrthoDB" id="9803354at2"/>
<dbReference type="PhylomeDB" id="P77434"/>
<dbReference type="BioCyc" id="EcoCyc:G7242-MONOMER"/>
<dbReference type="BioCyc" id="MetaCyc:G7242-MONOMER"/>
<dbReference type="SABIO-RK" id="P77434"/>
<dbReference type="UniPathway" id="UPA00133"/>
<dbReference type="PRO" id="PR:P77434"/>
<dbReference type="Proteomes" id="UP000000625">
    <property type="component" value="Chromosome"/>
</dbReference>
<dbReference type="GO" id="GO:0005737">
    <property type="term" value="C:cytoplasm"/>
    <property type="evidence" value="ECO:0007669"/>
    <property type="project" value="UniProtKB-SubCell"/>
</dbReference>
<dbReference type="GO" id="GO:0004021">
    <property type="term" value="F:L-alanine:2-oxoglutarate aminotransferase activity"/>
    <property type="evidence" value="ECO:0000314"/>
    <property type="project" value="EcoCyc"/>
</dbReference>
<dbReference type="GO" id="GO:0042803">
    <property type="term" value="F:protein homodimerization activity"/>
    <property type="evidence" value="ECO:0000314"/>
    <property type="project" value="EcoCyc"/>
</dbReference>
<dbReference type="GO" id="GO:0030170">
    <property type="term" value="F:pyridoxal phosphate binding"/>
    <property type="evidence" value="ECO:0007669"/>
    <property type="project" value="InterPro"/>
</dbReference>
<dbReference type="GO" id="GO:0008483">
    <property type="term" value="F:transaminase activity"/>
    <property type="evidence" value="ECO:0000316"/>
    <property type="project" value="EcoliWiki"/>
</dbReference>
<dbReference type="GO" id="GO:0006523">
    <property type="term" value="P:alanine biosynthetic process"/>
    <property type="evidence" value="ECO:0000316"/>
    <property type="project" value="EcoliWiki"/>
</dbReference>
<dbReference type="GO" id="GO:0030632">
    <property type="term" value="P:D-alanine biosynthetic process"/>
    <property type="evidence" value="ECO:0000315"/>
    <property type="project" value="UniProtKB"/>
</dbReference>
<dbReference type="GO" id="GO:0019272">
    <property type="term" value="P:L-alanine biosynthetic process from pyruvate"/>
    <property type="evidence" value="ECO:0000315"/>
    <property type="project" value="EcoCyc"/>
</dbReference>
<dbReference type="CDD" id="cd00609">
    <property type="entry name" value="AAT_like"/>
    <property type="match status" value="1"/>
</dbReference>
<dbReference type="FunFam" id="3.40.640.10:FF:000018">
    <property type="entry name" value="Alanine aminotransferase AlaC"/>
    <property type="match status" value="1"/>
</dbReference>
<dbReference type="FunFam" id="3.90.1150.10:FF:000015">
    <property type="entry name" value="Alanine aminotransferase AlaC"/>
    <property type="match status" value="1"/>
</dbReference>
<dbReference type="Gene3D" id="3.90.1150.10">
    <property type="entry name" value="Aspartate Aminotransferase, domain 1"/>
    <property type="match status" value="1"/>
</dbReference>
<dbReference type="Gene3D" id="3.40.640.10">
    <property type="entry name" value="Type I PLP-dependent aspartate aminotransferase-like (Major domain)"/>
    <property type="match status" value="1"/>
</dbReference>
<dbReference type="InterPro" id="IPR004839">
    <property type="entry name" value="Aminotransferase_I/II_large"/>
</dbReference>
<dbReference type="InterPro" id="IPR050881">
    <property type="entry name" value="LL-DAP_aminotransferase"/>
</dbReference>
<dbReference type="InterPro" id="IPR015424">
    <property type="entry name" value="PyrdxlP-dep_Trfase"/>
</dbReference>
<dbReference type="InterPro" id="IPR015421">
    <property type="entry name" value="PyrdxlP-dep_Trfase_major"/>
</dbReference>
<dbReference type="InterPro" id="IPR015422">
    <property type="entry name" value="PyrdxlP-dep_Trfase_small"/>
</dbReference>
<dbReference type="NCBIfam" id="NF006033">
    <property type="entry name" value="PRK08175.1"/>
    <property type="match status" value="1"/>
</dbReference>
<dbReference type="PANTHER" id="PTHR42832">
    <property type="entry name" value="AMINO ACID AMINOTRANSFERASE"/>
    <property type="match status" value="1"/>
</dbReference>
<dbReference type="PANTHER" id="PTHR42832:SF1">
    <property type="entry name" value="GLUTAMATE-PYRUVATE AMINOTRANSFERASE ALAC"/>
    <property type="match status" value="1"/>
</dbReference>
<dbReference type="Pfam" id="PF00155">
    <property type="entry name" value="Aminotran_1_2"/>
    <property type="match status" value="1"/>
</dbReference>
<dbReference type="SUPFAM" id="SSF53383">
    <property type="entry name" value="PLP-dependent transferases"/>
    <property type="match status" value="1"/>
</dbReference>
<keyword id="KW-0028">Amino-acid biosynthesis</keyword>
<keyword id="KW-0032">Aminotransferase</keyword>
<keyword id="KW-0963">Cytoplasm</keyword>
<keyword id="KW-0663">Pyridoxal phosphate</keyword>
<keyword id="KW-1185">Reference proteome</keyword>
<keyword id="KW-0808">Transferase</keyword>
<comment type="function">
    <text evidence="3 4">Involved in the biosynthesis of alanine (PubMed:20729367). Catalyzes the transamination of pyruvate by glutamate, leading to the formation of L-alanine and 2-oxoglutarate. Is also able to catalyze the reverse reaction (PubMed:20729367).</text>
</comment>
<comment type="catalytic activity">
    <reaction evidence="3">
        <text>L-alanine + 2-oxoglutarate = pyruvate + L-glutamate</text>
        <dbReference type="Rhea" id="RHEA:19453"/>
        <dbReference type="ChEBI" id="CHEBI:15361"/>
        <dbReference type="ChEBI" id="CHEBI:16810"/>
        <dbReference type="ChEBI" id="CHEBI:29985"/>
        <dbReference type="ChEBI" id="CHEBI:57972"/>
        <dbReference type="EC" id="2.6.1.2"/>
    </reaction>
    <physiologicalReaction direction="right-to-left" evidence="3">
        <dbReference type="Rhea" id="RHEA:19455"/>
    </physiologicalReaction>
</comment>
<comment type="cofactor">
    <cofactor evidence="7">
        <name>pyridoxal 5'-phosphate</name>
        <dbReference type="ChEBI" id="CHEBI:597326"/>
    </cofactor>
</comment>
<comment type="biophysicochemical properties">
    <kinetics>
        <KM evidence="3">0.94 mM for pyruvate (at 37 degrees Celsius and pH 8.5)</KM>
    </kinetics>
</comment>
<comment type="pathway">
    <text evidence="3">Amino-acid biosynthesis; L-alanine biosynthesis.</text>
</comment>
<comment type="subunit">
    <text evidence="3">Homodimer.</text>
</comment>
<comment type="subcellular location">
    <subcellularLocation>
        <location evidence="1">Cytoplasm</location>
    </subcellularLocation>
</comment>
<comment type="induction">
    <text evidence="2 3">Activated by SgrR and modestly repressed by alanine and leucine via Lrp.</text>
</comment>
<comment type="similarity">
    <text evidence="6">Belongs to the class-I pyridoxal-phosphate-dependent aminotransferase family.</text>
</comment>
<protein>
    <recommendedName>
        <fullName>Glutamate-pyruvate aminotransferase AlaC</fullName>
        <ecNumber evidence="3">2.6.1.2</ecNumber>
    </recommendedName>
</protein>
<accession>P77434</accession>
<proteinExistence type="evidence at protein level"/>
<sequence>MADTRPERRFTRIDRLPPYVFNITAELKMAARRRGEDIIDFSMGNPDGATPPHIVEKLCTVAQRPDTHGYSTSRGIPRLRRAISRWYQDRYDVEIDPESEAIVTIGSKEGLAHLMLATLDHGDTVLVPNPSYPIHIYGAVIAGAQVRSVPLVEGVDFFNELERAIRESYPKPKMMILGFPSNPTAQCVELEFFEKVVALAKRYDVLVVHDLAYADIVYDGWKAPSIMQVPGARDVAVEFFTLSKSYNMAGWRIGFMVGNKTLVSALARIKSYHDYGTFTPLQVAAIAALEGDQQCVRDIAEQYKRRRDVLVKGLHEAGWMVEMPKASMYVWAKIPEPYAAMGSLEFAKKLLNEAKVCVSPGIGFGDYGDTHVRFALIENRDRIRQAIRGIKAMFRADGLLPASSKHIHENAE</sequence>